<name>GLSA_HAHCH</name>
<organism>
    <name type="scientific">Hahella chejuensis (strain KCTC 2396)</name>
    <dbReference type="NCBI Taxonomy" id="349521"/>
    <lineage>
        <taxon>Bacteria</taxon>
        <taxon>Pseudomonadati</taxon>
        <taxon>Pseudomonadota</taxon>
        <taxon>Gammaproteobacteria</taxon>
        <taxon>Oceanospirillales</taxon>
        <taxon>Hahellaceae</taxon>
        <taxon>Hahella</taxon>
    </lineage>
</organism>
<gene>
    <name evidence="1" type="primary">glsA</name>
    <name type="ordered locus">HCH_06987</name>
</gene>
<accession>Q2S6X2</accession>
<feature type="chain" id="PRO_0000336029" description="Glutaminase">
    <location>
        <begin position="1"/>
        <end position="308"/>
    </location>
</feature>
<feature type="binding site" evidence="1">
    <location>
        <position position="68"/>
    </location>
    <ligand>
        <name>substrate</name>
    </ligand>
</feature>
<feature type="binding site" evidence="1">
    <location>
        <position position="118"/>
    </location>
    <ligand>
        <name>substrate</name>
    </ligand>
</feature>
<feature type="binding site" evidence="1">
    <location>
        <position position="162"/>
    </location>
    <ligand>
        <name>substrate</name>
    </ligand>
</feature>
<feature type="binding site" evidence="1">
    <location>
        <position position="169"/>
    </location>
    <ligand>
        <name>substrate</name>
    </ligand>
</feature>
<feature type="binding site" evidence="1">
    <location>
        <position position="193"/>
    </location>
    <ligand>
        <name>substrate</name>
    </ligand>
</feature>
<feature type="binding site" evidence="1">
    <location>
        <position position="244"/>
    </location>
    <ligand>
        <name>substrate</name>
    </ligand>
</feature>
<feature type="binding site" evidence="1">
    <location>
        <position position="262"/>
    </location>
    <ligand>
        <name>substrate</name>
    </ligand>
</feature>
<protein>
    <recommendedName>
        <fullName evidence="1">Glutaminase</fullName>
        <ecNumber evidence="1">3.5.1.2</ecNumber>
    </recommendedName>
</protein>
<proteinExistence type="inferred from homology"/>
<sequence>MKLQKSELPALLERIYSEVTPLYGVGKTADYIPPLSRVNPRQFGMAIRFVDGDEFTVGQASTPFSIQSISKLFALMLALDIVGDDLWKRVGREPSGMRFNSLLQLENENGIPRNPFINAGAIVVTDTIVNHSASPVKRLEQFMASLSGNVFNRYDPEVYVAEARTGYRNAAIANLLKALGNLEGEVDVVLDSYYKQCSMTMSCLDLARATESLANKGKSSFRTQFHGERMDKRVNALMLTCGLYDAAGNFAYQVGLPAKSGVGGGIVAVLPGYFSVAVWSPELDSYGNSVLGQKALELLTHYTSSSIF</sequence>
<dbReference type="EC" id="3.5.1.2" evidence="1"/>
<dbReference type="EMBL" id="CP000155">
    <property type="protein sequence ID" value="ABC33602.1"/>
    <property type="molecule type" value="Genomic_DNA"/>
</dbReference>
<dbReference type="RefSeq" id="WP_011400652.1">
    <property type="nucleotide sequence ID" value="NC_007645.1"/>
</dbReference>
<dbReference type="SMR" id="Q2S6X2"/>
<dbReference type="STRING" id="349521.HCH_06987"/>
<dbReference type="KEGG" id="hch:HCH_06987"/>
<dbReference type="eggNOG" id="COG2066">
    <property type="taxonomic scope" value="Bacteria"/>
</dbReference>
<dbReference type="HOGENOM" id="CLU_027932_1_1_6"/>
<dbReference type="OrthoDB" id="9788822at2"/>
<dbReference type="Proteomes" id="UP000000238">
    <property type="component" value="Chromosome"/>
</dbReference>
<dbReference type="GO" id="GO:0004359">
    <property type="term" value="F:glutaminase activity"/>
    <property type="evidence" value="ECO:0007669"/>
    <property type="project" value="UniProtKB-UniRule"/>
</dbReference>
<dbReference type="GO" id="GO:0006537">
    <property type="term" value="P:glutamate biosynthetic process"/>
    <property type="evidence" value="ECO:0007669"/>
    <property type="project" value="TreeGrafter"/>
</dbReference>
<dbReference type="GO" id="GO:0006543">
    <property type="term" value="P:glutamine catabolic process"/>
    <property type="evidence" value="ECO:0007669"/>
    <property type="project" value="TreeGrafter"/>
</dbReference>
<dbReference type="FunFam" id="3.40.710.10:FF:000005">
    <property type="entry name" value="Glutaminase"/>
    <property type="match status" value="1"/>
</dbReference>
<dbReference type="Gene3D" id="3.40.710.10">
    <property type="entry name" value="DD-peptidase/beta-lactamase superfamily"/>
    <property type="match status" value="1"/>
</dbReference>
<dbReference type="HAMAP" id="MF_00313">
    <property type="entry name" value="Glutaminase"/>
    <property type="match status" value="1"/>
</dbReference>
<dbReference type="InterPro" id="IPR012338">
    <property type="entry name" value="Beta-lactam/transpept-like"/>
</dbReference>
<dbReference type="InterPro" id="IPR015868">
    <property type="entry name" value="Glutaminase"/>
</dbReference>
<dbReference type="NCBIfam" id="TIGR03814">
    <property type="entry name" value="Gln_ase"/>
    <property type="match status" value="1"/>
</dbReference>
<dbReference type="NCBIfam" id="NF002133">
    <property type="entry name" value="PRK00971.1-2"/>
    <property type="match status" value="1"/>
</dbReference>
<dbReference type="PANTHER" id="PTHR12544">
    <property type="entry name" value="GLUTAMINASE"/>
    <property type="match status" value="1"/>
</dbReference>
<dbReference type="PANTHER" id="PTHR12544:SF29">
    <property type="entry name" value="GLUTAMINASE"/>
    <property type="match status" value="1"/>
</dbReference>
<dbReference type="Pfam" id="PF04960">
    <property type="entry name" value="Glutaminase"/>
    <property type="match status" value="1"/>
</dbReference>
<dbReference type="SUPFAM" id="SSF56601">
    <property type="entry name" value="beta-lactamase/transpeptidase-like"/>
    <property type="match status" value="1"/>
</dbReference>
<comment type="catalytic activity">
    <reaction evidence="1">
        <text>L-glutamine + H2O = L-glutamate + NH4(+)</text>
        <dbReference type="Rhea" id="RHEA:15889"/>
        <dbReference type="ChEBI" id="CHEBI:15377"/>
        <dbReference type="ChEBI" id="CHEBI:28938"/>
        <dbReference type="ChEBI" id="CHEBI:29985"/>
        <dbReference type="ChEBI" id="CHEBI:58359"/>
        <dbReference type="EC" id="3.5.1.2"/>
    </reaction>
</comment>
<comment type="subunit">
    <text evidence="1">Homotetramer.</text>
</comment>
<comment type="similarity">
    <text evidence="1">Belongs to the glutaminase family.</text>
</comment>
<reference key="1">
    <citation type="journal article" date="2005" name="Nucleic Acids Res.">
        <title>Genomic blueprint of Hahella chejuensis, a marine microbe producing an algicidal agent.</title>
        <authorList>
            <person name="Jeong H."/>
            <person name="Yim J.H."/>
            <person name="Lee C."/>
            <person name="Choi S.-H."/>
            <person name="Park Y.K."/>
            <person name="Yoon S.H."/>
            <person name="Hur C.-G."/>
            <person name="Kang H.-Y."/>
            <person name="Kim D."/>
            <person name="Lee H.H."/>
            <person name="Park K.H."/>
            <person name="Park S.-H."/>
            <person name="Park H.-S."/>
            <person name="Lee H.K."/>
            <person name="Oh T.K."/>
            <person name="Kim J.F."/>
        </authorList>
    </citation>
    <scope>NUCLEOTIDE SEQUENCE [LARGE SCALE GENOMIC DNA]</scope>
    <source>
        <strain>KCTC 2396</strain>
    </source>
</reference>
<evidence type="ECO:0000255" key="1">
    <source>
        <dbReference type="HAMAP-Rule" id="MF_00313"/>
    </source>
</evidence>
<keyword id="KW-0378">Hydrolase</keyword>
<keyword id="KW-1185">Reference proteome</keyword>